<reference key="1">
    <citation type="journal article" date="2000" name="Nucleic Acids Res.">
        <title>Complete genome sequence of the alkaliphilic bacterium Bacillus halodurans and genomic sequence comparison with Bacillus subtilis.</title>
        <authorList>
            <person name="Takami H."/>
            <person name="Nakasone K."/>
            <person name="Takaki Y."/>
            <person name="Maeno G."/>
            <person name="Sasaki R."/>
            <person name="Masui N."/>
            <person name="Fuji F."/>
            <person name="Hirama C."/>
            <person name="Nakamura Y."/>
            <person name="Ogasawara N."/>
            <person name="Kuhara S."/>
            <person name="Horikoshi K."/>
        </authorList>
    </citation>
    <scope>NUCLEOTIDE SEQUENCE [LARGE SCALE GENOMIC DNA]</scope>
    <source>
        <strain>ATCC BAA-125 / DSM 18197 / FERM 7344 / JCM 9153 / C-125</strain>
    </source>
</reference>
<comment type="function">
    <text evidence="1">Catalyzes the phosphorylation of D-fructose 6-phosphate to fructose 1,6-bisphosphate by ATP, the first committing step of glycolysis.</text>
</comment>
<comment type="catalytic activity">
    <reaction evidence="1">
        <text>beta-D-fructose 6-phosphate + ATP = beta-D-fructose 1,6-bisphosphate + ADP + H(+)</text>
        <dbReference type="Rhea" id="RHEA:16109"/>
        <dbReference type="ChEBI" id="CHEBI:15378"/>
        <dbReference type="ChEBI" id="CHEBI:30616"/>
        <dbReference type="ChEBI" id="CHEBI:32966"/>
        <dbReference type="ChEBI" id="CHEBI:57634"/>
        <dbReference type="ChEBI" id="CHEBI:456216"/>
        <dbReference type="EC" id="2.7.1.11"/>
    </reaction>
</comment>
<comment type="cofactor">
    <cofactor evidence="1">
        <name>Mg(2+)</name>
        <dbReference type="ChEBI" id="CHEBI:18420"/>
    </cofactor>
</comment>
<comment type="activity regulation">
    <text evidence="1">Allosterically activated by ADP and other diphosphonucleosides, and allosterically inhibited by phosphoenolpyruvate.</text>
</comment>
<comment type="pathway">
    <text evidence="1">Carbohydrate degradation; glycolysis; D-glyceraldehyde 3-phosphate and glycerone phosphate from D-glucose: step 3/4.</text>
</comment>
<comment type="subunit">
    <text evidence="1">Homotetramer.</text>
</comment>
<comment type="subcellular location">
    <subcellularLocation>
        <location evidence="1">Cytoplasm</location>
    </subcellularLocation>
</comment>
<comment type="similarity">
    <text evidence="1">Belongs to the phosphofructokinase type A (PFKA) family. ATP-dependent PFK group I subfamily. Prokaryotic clade 'B1' sub-subfamily.</text>
</comment>
<dbReference type="EC" id="2.7.1.11" evidence="1"/>
<dbReference type="EMBL" id="BA000004">
    <property type="protein sequence ID" value="BAB06883.1"/>
    <property type="molecule type" value="Genomic_DNA"/>
</dbReference>
<dbReference type="PIR" id="D84045">
    <property type="entry name" value="D84045"/>
</dbReference>
<dbReference type="RefSeq" id="WP_010899307.1">
    <property type="nucleotide sequence ID" value="NC_002570.2"/>
</dbReference>
<dbReference type="SMR" id="Q9K843"/>
<dbReference type="STRING" id="272558.gene:10729076"/>
<dbReference type="GeneID" id="87598684"/>
<dbReference type="KEGG" id="bha:BH3164"/>
<dbReference type="eggNOG" id="COG0205">
    <property type="taxonomic scope" value="Bacteria"/>
</dbReference>
<dbReference type="HOGENOM" id="CLU_020655_0_1_9"/>
<dbReference type="OrthoDB" id="9802503at2"/>
<dbReference type="UniPathway" id="UPA00109">
    <property type="reaction ID" value="UER00182"/>
</dbReference>
<dbReference type="Proteomes" id="UP000001258">
    <property type="component" value="Chromosome"/>
</dbReference>
<dbReference type="GO" id="GO:0005945">
    <property type="term" value="C:6-phosphofructokinase complex"/>
    <property type="evidence" value="ECO:0007669"/>
    <property type="project" value="TreeGrafter"/>
</dbReference>
<dbReference type="GO" id="GO:0003872">
    <property type="term" value="F:6-phosphofructokinase activity"/>
    <property type="evidence" value="ECO:0007669"/>
    <property type="project" value="UniProtKB-UniRule"/>
</dbReference>
<dbReference type="GO" id="GO:0016208">
    <property type="term" value="F:AMP binding"/>
    <property type="evidence" value="ECO:0007669"/>
    <property type="project" value="TreeGrafter"/>
</dbReference>
<dbReference type="GO" id="GO:0005524">
    <property type="term" value="F:ATP binding"/>
    <property type="evidence" value="ECO:0007669"/>
    <property type="project" value="UniProtKB-KW"/>
</dbReference>
<dbReference type="GO" id="GO:0070095">
    <property type="term" value="F:fructose-6-phosphate binding"/>
    <property type="evidence" value="ECO:0007669"/>
    <property type="project" value="TreeGrafter"/>
</dbReference>
<dbReference type="GO" id="GO:0042802">
    <property type="term" value="F:identical protein binding"/>
    <property type="evidence" value="ECO:0007669"/>
    <property type="project" value="TreeGrafter"/>
</dbReference>
<dbReference type="GO" id="GO:0046872">
    <property type="term" value="F:metal ion binding"/>
    <property type="evidence" value="ECO:0007669"/>
    <property type="project" value="UniProtKB-KW"/>
</dbReference>
<dbReference type="GO" id="GO:0048029">
    <property type="term" value="F:monosaccharide binding"/>
    <property type="evidence" value="ECO:0007669"/>
    <property type="project" value="TreeGrafter"/>
</dbReference>
<dbReference type="GO" id="GO:0061621">
    <property type="term" value="P:canonical glycolysis"/>
    <property type="evidence" value="ECO:0007669"/>
    <property type="project" value="TreeGrafter"/>
</dbReference>
<dbReference type="GO" id="GO:0030388">
    <property type="term" value="P:fructose 1,6-bisphosphate metabolic process"/>
    <property type="evidence" value="ECO:0007669"/>
    <property type="project" value="TreeGrafter"/>
</dbReference>
<dbReference type="GO" id="GO:0006002">
    <property type="term" value="P:fructose 6-phosphate metabolic process"/>
    <property type="evidence" value="ECO:0007669"/>
    <property type="project" value="InterPro"/>
</dbReference>
<dbReference type="CDD" id="cd00763">
    <property type="entry name" value="Bacterial_PFK"/>
    <property type="match status" value="1"/>
</dbReference>
<dbReference type="FunFam" id="3.40.50.450:FF:000001">
    <property type="entry name" value="ATP-dependent 6-phosphofructokinase"/>
    <property type="match status" value="1"/>
</dbReference>
<dbReference type="FunFam" id="3.40.50.460:FF:000002">
    <property type="entry name" value="ATP-dependent 6-phosphofructokinase"/>
    <property type="match status" value="1"/>
</dbReference>
<dbReference type="Gene3D" id="3.40.50.450">
    <property type="match status" value="1"/>
</dbReference>
<dbReference type="Gene3D" id="3.40.50.460">
    <property type="entry name" value="Phosphofructokinase domain"/>
    <property type="match status" value="1"/>
</dbReference>
<dbReference type="HAMAP" id="MF_00339">
    <property type="entry name" value="Phosphofructokinase_I_B1"/>
    <property type="match status" value="1"/>
</dbReference>
<dbReference type="InterPro" id="IPR022953">
    <property type="entry name" value="ATP_PFK"/>
</dbReference>
<dbReference type="InterPro" id="IPR012003">
    <property type="entry name" value="ATP_PFK_prok-type"/>
</dbReference>
<dbReference type="InterPro" id="IPR012828">
    <property type="entry name" value="PFKA_ATP_prok"/>
</dbReference>
<dbReference type="InterPro" id="IPR015912">
    <property type="entry name" value="Phosphofructokinase_CS"/>
</dbReference>
<dbReference type="InterPro" id="IPR000023">
    <property type="entry name" value="Phosphofructokinase_dom"/>
</dbReference>
<dbReference type="InterPro" id="IPR035966">
    <property type="entry name" value="PKF_sf"/>
</dbReference>
<dbReference type="NCBIfam" id="TIGR02482">
    <property type="entry name" value="PFKA_ATP"/>
    <property type="match status" value="1"/>
</dbReference>
<dbReference type="NCBIfam" id="NF002872">
    <property type="entry name" value="PRK03202.1"/>
    <property type="match status" value="1"/>
</dbReference>
<dbReference type="PANTHER" id="PTHR13697:SF4">
    <property type="entry name" value="ATP-DEPENDENT 6-PHOSPHOFRUCTOKINASE"/>
    <property type="match status" value="1"/>
</dbReference>
<dbReference type="PANTHER" id="PTHR13697">
    <property type="entry name" value="PHOSPHOFRUCTOKINASE"/>
    <property type="match status" value="1"/>
</dbReference>
<dbReference type="Pfam" id="PF00365">
    <property type="entry name" value="PFK"/>
    <property type="match status" value="1"/>
</dbReference>
<dbReference type="PIRSF" id="PIRSF000532">
    <property type="entry name" value="ATP_PFK_prok"/>
    <property type="match status" value="1"/>
</dbReference>
<dbReference type="PRINTS" id="PR00476">
    <property type="entry name" value="PHFRCTKINASE"/>
</dbReference>
<dbReference type="SUPFAM" id="SSF53784">
    <property type="entry name" value="Phosphofructokinase"/>
    <property type="match status" value="1"/>
</dbReference>
<dbReference type="PROSITE" id="PS00433">
    <property type="entry name" value="PHOSPHOFRUCTOKINASE"/>
    <property type="match status" value="1"/>
</dbReference>
<keyword id="KW-0021">Allosteric enzyme</keyword>
<keyword id="KW-0067">ATP-binding</keyword>
<keyword id="KW-0963">Cytoplasm</keyword>
<keyword id="KW-0324">Glycolysis</keyword>
<keyword id="KW-0418">Kinase</keyword>
<keyword id="KW-0460">Magnesium</keyword>
<keyword id="KW-0479">Metal-binding</keyword>
<keyword id="KW-0547">Nucleotide-binding</keyword>
<keyword id="KW-1185">Reference proteome</keyword>
<keyword id="KW-0808">Transferase</keyword>
<evidence type="ECO:0000255" key="1">
    <source>
        <dbReference type="HAMAP-Rule" id="MF_00339"/>
    </source>
</evidence>
<protein>
    <recommendedName>
        <fullName evidence="1">ATP-dependent 6-phosphofructokinase</fullName>
        <shortName evidence="1">ATP-PFK</shortName>
        <shortName evidence="1">Phosphofructokinase</shortName>
        <ecNumber evidence="1">2.7.1.11</ecNumber>
    </recommendedName>
    <alternativeName>
        <fullName evidence="1">Phosphohexokinase</fullName>
    </alternativeName>
</protein>
<gene>
    <name evidence="1" type="primary">pfkA</name>
    <name type="synonym">pfk</name>
    <name type="ordered locus">BH3164</name>
</gene>
<organism>
    <name type="scientific">Halalkalibacterium halodurans (strain ATCC BAA-125 / DSM 18197 / FERM 7344 / JCM 9153 / C-125)</name>
    <name type="common">Bacillus halodurans</name>
    <dbReference type="NCBI Taxonomy" id="272558"/>
    <lineage>
        <taxon>Bacteria</taxon>
        <taxon>Bacillati</taxon>
        <taxon>Bacillota</taxon>
        <taxon>Bacilli</taxon>
        <taxon>Bacillales</taxon>
        <taxon>Bacillaceae</taxon>
        <taxon>Halalkalibacterium (ex Joshi et al. 2022)</taxon>
    </lineage>
</organism>
<feature type="chain" id="PRO_0000111932" description="ATP-dependent 6-phosphofructokinase">
    <location>
        <begin position="1"/>
        <end position="319"/>
    </location>
</feature>
<feature type="active site" description="Proton acceptor" evidence="1">
    <location>
        <position position="127"/>
    </location>
</feature>
<feature type="binding site" evidence="1">
    <location>
        <position position="11"/>
    </location>
    <ligand>
        <name>ATP</name>
        <dbReference type="ChEBI" id="CHEBI:30616"/>
    </ligand>
</feature>
<feature type="binding site" evidence="1">
    <location>
        <begin position="21"/>
        <end position="25"/>
    </location>
    <ligand>
        <name>ADP</name>
        <dbReference type="ChEBI" id="CHEBI:456216"/>
        <note>allosteric activator; ligand shared between dimeric partners</note>
    </ligand>
</feature>
<feature type="binding site" evidence="1">
    <location>
        <begin position="72"/>
        <end position="73"/>
    </location>
    <ligand>
        <name>ATP</name>
        <dbReference type="ChEBI" id="CHEBI:30616"/>
    </ligand>
</feature>
<feature type="binding site" evidence="1">
    <location>
        <begin position="102"/>
        <end position="105"/>
    </location>
    <ligand>
        <name>ATP</name>
        <dbReference type="ChEBI" id="CHEBI:30616"/>
    </ligand>
</feature>
<feature type="binding site" evidence="1">
    <location>
        <position position="103"/>
    </location>
    <ligand>
        <name>Mg(2+)</name>
        <dbReference type="ChEBI" id="CHEBI:18420"/>
        <note>catalytic</note>
    </ligand>
</feature>
<feature type="binding site" description="in other chain" evidence="1">
    <location>
        <begin position="125"/>
        <end position="127"/>
    </location>
    <ligand>
        <name>substrate</name>
        <note>ligand shared between dimeric partners</note>
    </ligand>
</feature>
<feature type="binding site" description="in other chain" evidence="1">
    <location>
        <position position="154"/>
    </location>
    <ligand>
        <name>ADP</name>
        <dbReference type="ChEBI" id="CHEBI:456216"/>
        <note>allosteric activator; ligand shared between dimeric partners</note>
    </ligand>
</feature>
<feature type="binding site" evidence="1">
    <location>
        <position position="162"/>
    </location>
    <ligand>
        <name>substrate</name>
        <note>ligand shared between dimeric partners</note>
    </ligand>
</feature>
<feature type="binding site" description="in other chain" evidence="1">
    <location>
        <begin position="169"/>
        <end position="171"/>
    </location>
    <ligand>
        <name>substrate</name>
        <note>ligand shared between dimeric partners</note>
    </ligand>
</feature>
<feature type="binding site" description="in other chain" evidence="1">
    <location>
        <begin position="185"/>
        <end position="187"/>
    </location>
    <ligand>
        <name>ADP</name>
        <dbReference type="ChEBI" id="CHEBI:456216"/>
        <note>allosteric activator; ligand shared between dimeric partners</note>
    </ligand>
</feature>
<feature type="binding site" description="in other chain" evidence="1">
    <location>
        <position position="211"/>
    </location>
    <ligand>
        <name>ADP</name>
        <dbReference type="ChEBI" id="CHEBI:456216"/>
        <note>allosteric activator; ligand shared between dimeric partners</note>
    </ligand>
</feature>
<feature type="binding site" description="in other chain" evidence="1">
    <location>
        <begin position="213"/>
        <end position="215"/>
    </location>
    <ligand>
        <name>ADP</name>
        <dbReference type="ChEBI" id="CHEBI:456216"/>
        <note>allosteric activator; ligand shared between dimeric partners</note>
    </ligand>
</feature>
<feature type="binding site" description="in other chain" evidence="1">
    <location>
        <position position="222"/>
    </location>
    <ligand>
        <name>substrate</name>
        <note>ligand shared between dimeric partners</note>
    </ligand>
</feature>
<feature type="binding site" evidence="1">
    <location>
        <position position="243"/>
    </location>
    <ligand>
        <name>substrate</name>
        <note>ligand shared between dimeric partners</note>
    </ligand>
</feature>
<feature type="binding site" description="in other chain" evidence="1">
    <location>
        <begin position="249"/>
        <end position="252"/>
    </location>
    <ligand>
        <name>substrate</name>
        <note>ligand shared between dimeric partners</note>
    </ligand>
</feature>
<name>PFKA_HALH5</name>
<proteinExistence type="inferred from homology"/>
<sequence length="319" mass="34201">MKRIGVLTSGGDSPGMNAAIRAVVRKAIYHGVEVYGIYQGYAGLISGDIRKMELGSVGDIIHRGGTILYTARCEEFKTLEGQKKGIEQLKKFGIEGLVVIGGDGSFAGAQKLTEHGFPTVGVPGTIDNDIPGTDFTIGFDTALNTVIDAIDKIRDTATSHDRTYVIEVMGRNAGDLALWSGLADGAETIVIPEADHDIDQIISRLQRGQERGKKHSIIVVAEGVGSGMDFGREISERTGAETRVTVLGHIQRGGSPTGFDRVLASRLGAKAVDLLLEGQAGVTVGIENNKLVHHDITEVLQRKHSIDLDMYRLSQELSI</sequence>
<accession>Q9K843</accession>